<name>LPXC4_ARATH</name>
<proteinExistence type="evidence at protein level"/>
<feature type="transit peptide" description="Mitochondrion" evidence="3">
    <location>
        <begin position="1"/>
        <end position="21"/>
    </location>
</feature>
<feature type="chain" id="PRO_0000419660" description="Probable UDP-3-O-acyl-N-acetylglucosamine deacetylase 4, mitochondrial">
    <location>
        <begin position="22"/>
        <end position="326"/>
    </location>
</feature>
<feature type="binding site" evidence="1">
    <location>
        <position position="109"/>
    </location>
    <ligand>
        <name>Zn(2+)</name>
        <dbReference type="ChEBI" id="CHEBI:29105"/>
    </ligand>
</feature>
<feature type="binding site" evidence="1">
    <location>
        <position position="281"/>
    </location>
    <ligand>
        <name>Zn(2+)</name>
        <dbReference type="ChEBI" id="CHEBI:29105"/>
    </ligand>
</feature>
<feature type="binding site" evidence="1">
    <location>
        <position position="285"/>
    </location>
    <ligand>
        <name>Zn(2+)</name>
        <dbReference type="ChEBI" id="CHEBI:29105"/>
    </ligand>
</feature>
<dbReference type="EC" id="3.5.1.108" evidence="1"/>
<dbReference type="EMBL" id="AC004133">
    <property type="protein sequence ID" value="AAG03130.1"/>
    <property type="status" value="ALT_SEQ"/>
    <property type="molecule type" value="Genomic_DNA"/>
</dbReference>
<dbReference type="EMBL" id="AC079374">
    <property type="protein sequence ID" value="AAG40091.1"/>
    <property type="status" value="ALT_SEQ"/>
    <property type="molecule type" value="Genomic_DNA"/>
</dbReference>
<dbReference type="EMBL" id="CP002684">
    <property type="protein sequence ID" value="AEE30582.1"/>
    <property type="molecule type" value="Genomic_DNA"/>
</dbReference>
<dbReference type="RefSeq" id="NP_001185090.1">
    <property type="nucleotide sequence ID" value="NM_001198161.1"/>
</dbReference>
<dbReference type="SMR" id="P0DKB9"/>
<dbReference type="FunCoup" id="P0DKB9">
    <property type="interactions" value="7"/>
</dbReference>
<dbReference type="STRING" id="3702.P0DKB9"/>
<dbReference type="EnsemblPlants" id="AT1G24793.1">
    <property type="protein sequence ID" value="AT1G24793.1"/>
    <property type="gene ID" value="AT1G24793"/>
</dbReference>
<dbReference type="EnsemblPlants" id="AT1G25054.1">
    <property type="protein sequence ID" value="AT1G25054.1"/>
    <property type="gene ID" value="AT1G25054"/>
</dbReference>
<dbReference type="EnsemblPlants" id="AT1G25145.1">
    <property type="protein sequence ID" value="AT1G25145.1"/>
    <property type="gene ID" value="AT1G25145"/>
</dbReference>
<dbReference type="EnsemblPlants" id="AT1G25210.2">
    <property type="protein sequence ID" value="AT1G25210.2"/>
    <property type="gene ID" value="AT1G25210"/>
</dbReference>
<dbReference type="GeneID" id="10723064"/>
<dbReference type="Gramene" id="AT1G24793.1">
    <property type="protein sequence ID" value="AT1G24793.1"/>
    <property type="gene ID" value="AT1G24793"/>
</dbReference>
<dbReference type="Gramene" id="AT1G25054.1">
    <property type="protein sequence ID" value="AT1G25054.1"/>
    <property type="gene ID" value="AT1G25054"/>
</dbReference>
<dbReference type="Gramene" id="AT1G25145.1">
    <property type="protein sequence ID" value="AT1G25145.1"/>
    <property type="gene ID" value="AT1G25145"/>
</dbReference>
<dbReference type="Gramene" id="AT1G25210.2">
    <property type="protein sequence ID" value="AT1G25210.2"/>
    <property type="gene ID" value="AT1G25210"/>
</dbReference>
<dbReference type="KEGG" id="ath:AT1G24793"/>
<dbReference type="KEGG" id="ath:AT1G25054"/>
<dbReference type="KEGG" id="ath:AT1G25145"/>
<dbReference type="KEGG" id="ath:AT1G25210"/>
<dbReference type="Araport" id="AT1G25145"/>
<dbReference type="TAIR" id="AT1G25145">
    <property type="gene designation" value="LPXC4"/>
</dbReference>
<dbReference type="HOGENOM" id="CLU_046528_0_0_1"/>
<dbReference type="InParanoid" id="P0DKB9"/>
<dbReference type="OMA" id="IVFYRSD"/>
<dbReference type="PhylomeDB" id="P0DKB9"/>
<dbReference type="UniPathway" id="UPA00359">
    <property type="reaction ID" value="UER00478"/>
</dbReference>
<dbReference type="PRO" id="PR:P0DKB9"/>
<dbReference type="Proteomes" id="UP000006548">
    <property type="component" value="Chromosome 1"/>
</dbReference>
<dbReference type="ExpressionAtlas" id="P0DKB9">
    <property type="expression patterns" value="baseline"/>
</dbReference>
<dbReference type="GO" id="GO:0016020">
    <property type="term" value="C:membrane"/>
    <property type="evidence" value="ECO:0007669"/>
    <property type="project" value="GOC"/>
</dbReference>
<dbReference type="GO" id="GO:0005739">
    <property type="term" value="C:mitochondrion"/>
    <property type="evidence" value="ECO:0000314"/>
    <property type="project" value="UniProtKB"/>
</dbReference>
<dbReference type="GO" id="GO:0046872">
    <property type="term" value="F:metal ion binding"/>
    <property type="evidence" value="ECO:0007669"/>
    <property type="project" value="UniProtKB-KW"/>
</dbReference>
<dbReference type="GO" id="GO:0103117">
    <property type="term" value="F:UDP-3-O-acyl-N-acetylglucosamine deacetylase activity"/>
    <property type="evidence" value="ECO:0000315"/>
    <property type="project" value="UniProtKB"/>
</dbReference>
<dbReference type="GO" id="GO:0009245">
    <property type="term" value="P:lipid A biosynthetic process"/>
    <property type="evidence" value="ECO:0007669"/>
    <property type="project" value="UniProtKB-KW"/>
</dbReference>
<dbReference type="GO" id="GO:2001289">
    <property type="term" value="P:lipid X metabolic process"/>
    <property type="evidence" value="ECO:0000315"/>
    <property type="project" value="UniProtKB"/>
</dbReference>
<dbReference type="FunFam" id="3.30.230.20:FF:000002">
    <property type="entry name" value="Probable UDP-3-O-acyl-N-acetylglucosamine deacetylase 2, mitochondrial"/>
    <property type="match status" value="1"/>
</dbReference>
<dbReference type="FunFam" id="3.30.1700.10:FF:000002">
    <property type="entry name" value="Probable UDP-3-O-acyl-N-acetylglucosamine deacetylase 3, mitochondrial"/>
    <property type="match status" value="1"/>
</dbReference>
<dbReference type="Gene3D" id="3.30.230.20">
    <property type="entry name" value="lpxc deacetylase, domain 1"/>
    <property type="match status" value="1"/>
</dbReference>
<dbReference type="Gene3D" id="3.30.1700.10">
    <property type="entry name" value="lpxc deacetylase, domain 2"/>
    <property type="match status" value="1"/>
</dbReference>
<dbReference type="HAMAP" id="MF_00388">
    <property type="entry name" value="LpxC"/>
    <property type="match status" value="1"/>
</dbReference>
<dbReference type="InterPro" id="IPR020568">
    <property type="entry name" value="Ribosomal_Su5_D2-typ_SF"/>
</dbReference>
<dbReference type="InterPro" id="IPR004463">
    <property type="entry name" value="UDP-acyl_GlcNac_deAcase"/>
</dbReference>
<dbReference type="InterPro" id="IPR011334">
    <property type="entry name" value="UDP-acyl_GlcNac_deAcase_C"/>
</dbReference>
<dbReference type="InterPro" id="IPR015870">
    <property type="entry name" value="UDP-acyl_N-AcGlcN_deAcase_N"/>
</dbReference>
<dbReference type="NCBIfam" id="TIGR00325">
    <property type="entry name" value="lpxC"/>
    <property type="match status" value="1"/>
</dbReference>
<dbReference type="PANTHER" id="PTHR33694">
    <property type="entry name" value="UDP-3-O-ACYL-N-ACETYLGLUCOSAMINE DEACETYLASE 1, MITOCHONDRIAL-RELATED"/>
    <property type="match status" value="1"/>
</dbReference>
<dbReference type="PANTHER" id="PTHR33694:SF1">
    <property type="entry name" value="UDP-3-O-ACYL-N-ACETYLGLUCOSAMINE DEACETYLASE 1, MITOCHONDRIAL-RELATED"/>
    <property type="match status" value="1"/>
</dbReference>
<dbReference type="Pfam" id="PF03331">
    <property type="entry name" value="LpxC"/>
    <property type="match status" value="1"/>
</dbReference>
<dbReference type="SUPFAM" id="SSF54211">
    <property type="entry name" value="Ribosomal protein S5 domain 2-like"/>
    <property type="match status" value="2"/>
</dbReference>
<evidence type="ECO:0000250" key="1">
    <source>
        <dbReference type="UniProtKB" id="P0A725"/>
    </source>
</evidence>
<evidence type="ECO:0000269" key="2">
    <source>
    </source>
</evidence>
<evidence type="ECO:0000269" key="3">
    <source>
    </source>
</evidence>
<evidence type="ECO:0000305" key="4"/>
<evidence type="ECO:0000305" key="5">
    <source>
    </source>
</evidence>
<evidence type="ECO:0000305" key="6">
    <source>
    </source>
</evidence>
<keyword id="KW-0378">Hydrolase</keyword>
<keyword id="KW-0441">Lipid A biosynthesis</keyword>
<keyword id="KW-0444">Lipid biosynthesis</keyword>
<keyword id="KW-0443">Lipid metabolism</keyword>
<keyword id="KW-0479">Metal-binding</keyword>
<keyword id="KW-0496">Mitochondrion</keyword>
<keyword id="KW-1185">Reference proteome</keyword>
<keyword id="KW-0809">Transit peptide</keyword>
<keyword id="KW-0862">Zinc</keyword>
<protein>
    <recommendedName>
        <fullName evidence="1">Probable UDP-3-O-acyl-N-acetylglucosamine deacetylase 4, mitochondrial</fullName>
        <shortName evidence="1">UDP-3-O-acyl-GlcNAc deacetylase 4</shortName>
        <ecNumber evidence="1">3.5.1.108</ecNumber>
    </recommendedName>
    <alternativeName>
        <fullName>Protein LIPID X C4</fullName>
        <shortName>AtLpxC4</shortName>
    </alternativeName>
    <alternativeName>
        <fullName evidence="1">UDP-3-O-[R-3-hydroxymyristoyl]-N-acetylglucosamine deacetylase 4</fullName>
    </alternativeName>
</protein>
<reference key="1">
    <citation type="journal article" date="2000" name="Nature">
        <title>Sequence and analysis of chromosome 1 of the plant Arabidopsis thaliana.</title>
        <authorList>
            <person name="Theologis A."/>
            <person name="Ecker J.R."/>
            <person name="Palm C.J."/>
            <person name="Federspiel N.A."/>
            <person name="Kaul S."/>
            <person name="White O."/>
            <person name="Alonso J."/>
            <person name="Altafi H."/>
            <person name="Araujo R."/>
            <person name="Bowman C.L."/>
            <person name="Brooks S.Y."/>
            <person name="Buehler E."/>
            <person name="Chan A."/>
            <person name="Chao Q."/>
            <person name="Chen H."/>
            <person name="Cheuk R.F."/>
            <person name="Chin C.W."/>
            <person name="Chung M.K."/>
            <person name="Conn L."/>
            <person name="Conway A.B."/>
            <person name="Conway A.R."/>
            <person name="Creasy T.H."/>
            <person name="Dewar K."/>
            <person name="Dunn P."/>
            <person name="Etgu P."/>
            <person name="Feldblyum T.V."/>
            <person name="Feng J.-D."/>
            <person name="Fong B."/>
            <person name="Fujii C.Y."/>
            <person name="Gill J.E."/>
            <person name="Goldsmith A.D."/>
            <person name="Haas B."/>
            <person name="Hansen N.F."/>
            <person name="Hughes B."/>
            <person name="Huizar L."/>
            <person name="Hunter J.L."/>
            <person name="Jenkins J."/>
            <person name="Johnson-Hopson C."/>
            <person name="Khan S."/>
            <person name="Khaykin E."/>
            <person name="Kim C.J."/>
            <person name="Koo H.L."/>
            <person name="Kremenetskaia I."/>
            <person name="Kurtz D.B."/>
            <person name="Kwan A."/>
            <person name="Lam B."/>
            <person name="Langin-Hooper S."/>
            <person name="Lee A."/>
            <person name="Lee J.M."/>
            <person name="Lenz C.A."/>
            <person name="Li J.H."/>
            <person name="Li Y.-P."/>
            <person name="Lin X."/>
            <person name="Liu S.X."/>
            <person name="Liu Z.A."/>
            <person name="Luros J.S."/>
            <person name="Maiti R."/>
            <person name="Marziali A."/>
            <person name="Militscher J."/>
            <person name="Miranda M."/>
            <person name="Nguyen M."/>
            <person name="Nierman W.C."/>
            <person name="Osborne B.I."/>
            <person name="Pai G."/>
            <person name="Peterson J."/>
            <person name="Pham P.K."/>
            <person name="Rizzo M."/>
            <person name="Rooney T."/>
            <person name="Rowley D."/>
            <person name="Sakano H."/>
            <person name="Salzberg S.L."/>
            <person name="Schwartz J.R."/>
            <person name="Shinn P."/>
            <person name="Southwick A.M."/>
            <person name="Sun H."/>
            <person name="Tallon L.J."/>
            <person name="Tambunga G."/>
            <person name="Toriumi M.J."/>
            <person name="Town C.D."/>
            <person name="Utterback T."/>
            <person name="Van Aken S."/>
            <person name="Vaysberg M."/>
            <person name="Vysotskaia V.S."/>
            <person name="Walker M."/>
            <person name="Wu D."/>
            <person name="Yu G."/>
            <person name="Fraser C.M."/>
            <person name="Venter J.C."/>
            <person name="Davis R.W."/>
        </authorList>
    </citation>
    <scope>NUCLEOTIDE SEQUENCE [LARGE SCALE GENOMIC DNA]</scope>
    <source>
        <strain>cv. Columbia</strain>
    </source>
</reference>
<reference key="2">
    <citation type="journal article" date="2017" name="Plant J.">
        <title>Araport11: a complete reannotation of the Arabidopsis thaliana reference genome.</title>
        <authorList>
            <person name="Cheng C.Y."/>
            <person name="Krishnakumar V."/>
            <person name="Chan A.P."/>
            <person name="Thibaud-Nissen F."/>
            <person name="Schobel S."/>
            <person name="Town C.D."/>
        </authorList>
    </citation>
    <scope>GENOME REANNOTATION</scope>
    <source>
        <strain>cv. Columbia</strain>
    </source>
</reference>
<reference key="3">
    <citation type="journal article" date="2011" name="Proc. Natl. Acad. Sci. U.S.A.">
        <title>Pathway for lipid A biosynthesis in Arabidopsis thaliana resembling that of Escherichia coli.</title>
        <authorList>
            <person name="Li C."/>
            <person name="Guan Z."/>
            <person name="Liu D."/>
            <person name="Raetz C.R."/>
        </authorList>
    </citation>
    <scope>PATHWAY</scope>
    <scope>SUBCELLULAR LOCATION</scope>
    <scope>GENE FAMILY</scope>
    <scope>NOMENCLATURE</scope>
</reference>
<reference key="4">
    <citation type="journal article" date="2015" name="J. Exp. Bot.">
        <title>Identification of cleavage sites and substrate proteins for two mitochondrial intermediate peptidases in Arabidopsis thaliana.</title>
        <authorList>
            <person name="Carrie C."/>
            <person name="Venne A.S."/>
            <person name="Zahedi R.P."/>
            <person name="Soll J."/>
        </authorList>
    </citation>
    <scope>IDENTIFICATION BY MASS SPECTROMETRY</scope>
    <scope>CLEAVAGE OF TRANSIT PEPTIDE AFTER TYR-21</scope>
</reference>
<accession>P0DKB9</accession>
<accession>B3H6R1</accession>
<accession>P0C2G7</accession>
<accession>Q56X64</accession>
<accession>Q56XG5</accession>
<accession>Q7GAV1</accession>
<accession>Q8GXP0</accession>
<accession>Q8LPR6</accession>
<accession>Q9FE36</accession>
<accession>Q9FXK3</accession>
<accession>Q9FXK7</accession>
<sequence length="326" mass="35717">MRLPVTVKATKPSFLVIWIRYSSAASSPTVSLNPSGRLQQTLAGSVEVKGKSLHSGKFSTVKLNPEIAGAGRFFEFRSRFIPASIEFAQESPLCTTLLKDELKIRTVEHLLSALEAKGVDNCRIQIESESSDDREVEVPIFDGSAKEWVDAIQGVGINAAQNHDGESVEKMVAHVNKPVYVCKNDTFVAAFPALETRITCGIDFPQVPAIGCQWFSWRPIHESSFAKDIASSRTFCVYEEVERMREAGLIKGGSLDNAIVCSAEHGWMNPPLRFDDEACRHKILDLIGDLSLVSRGGNGGLPVAHIVAYKAGHALHTDLARHLTMD</sequence>
<gene>
    <name type="primary">LPXC4</name>
    <name type="ordered locus">At1g25145</name>
    <name type="ORF">F4F7.43</name>
    <name type="ORF">F5A9.4</name>
</gene>
<organism>
    <name type="scientific">Arabidopsis thaliana</name>
    <name type="common">Mouse-ear cress</name>
    <dbReference type="NCBI Taxonomy" id="3702"/>
    <lineage>
        <taxon>Eukaryota</taxon>
        <taxon>Viridiplantae</taxon>
        <taxon>Streptophyta</taxon>
        <taxon>Embryophyta</taxon>
        <taxon>Tracheophyta</taxon>
        <taxon>Spermatophyta</taxon>
        <taxon>Magnoliopsida</taxon>
        <taxon>eudicotyledons</taxon>
        <taxon>Gunneridae</taxon>
        <taxon>Pentapetalae</taxon>
        <taxon>rosids</taxon>
        <taxon>malvids</taxon>
        <taxon>Brassicales</taxon>
        <taxon>Brassicaceae</taxon>
        <taxon>Camelineae</taxon>
        <taxon>Arabidopsis</taxon>
    </lineage>
</organism>
<comment type="function">
    <text evidence="4">Involved in the biosynthesis of lipid A, a phosphorylated glycolipid that in bacteria anchors the lipopolysaccharide to the outer membrane of the cell. Lipid A-like molecules in plants may serve as structural components of the outer membranes of mitochondria and/or chloroplasts, or may be involved in signal transduction or plant defense responses (Potential).</text>
</comment>
<comment type="catalytic activity">
    <reaction evidence="1">
        <text>a UDP-3-O-[(3R)-3-hydroxyacyl]-N-acetyl-alpha-D-glucosamine + H2O = a UDP-3-O-[(3R)-3-hydroxyacyl]-alpha-D-glucosamine + acetate</text>
        <dbReference type="Rhea" id="RHEA:67816"/>
        <dbReference type="ChEBI" id="CHEBI:15377"/>
        <dbReference type="ChEBI" id="CHEBI:30089"/>
        <dbReference type="ChEBI" id="CHEBI:137740"/>
        <dbReference type="ChEBI" id="CHEBI:173225"/>
        <dbReference type="EC" id="3.5.1.108"/>
    </reaction>
</comment>
<comment type="cofactor">
    <cofactor evidence="1">
        <name>Zn(2+)</name>
        <dbReference type="ChEBI" id="CHEBI:29105"/>
    </cofactor>
</comment>
<comment type="pathway">
    <text evidence="2">Glycolipid biosynthesis; lipid IV(A) biosynthesis; lipid IV(A) from (3R)-3-hydroxytetradecanoyl-[acyl-carrier-protein] and UDP-N-acetyl-alpha-D-glucosamine: step 2/6.</text>
</comment>
<comment type="subcellular location">
    <subcellularLocation>
        <location evidence="2 6">Mitochondrion</location>
    </subcellularLocation>
</comment>
<comment type="miscellaneous">
    <text evidence="5">Plants silencing LPXC do not have altered morphology compared to wild-type plants when grown under normal growth conditions, but they do not accumulate 2,3-diacylglucosamine-1-phosphate.</text>
</comment>
<comment type="similarity">
    <text evidence="4">Belongs to the LpxC family.</text>
</comment>
<comment type="sequence caution" evidence="4">
    <conflict type="erroneous gene model prediction">
        <sequence resource="EMBL-CDS" id="AAG03130"/>
    </conflict>
    <text>The predicted gene has been split into 2 genes: At1g25145 and At1g25150.</text>
</comment>
<comment type="sequence caution" evidence="4">
    <conflict type="erroneous gene model prediction">
        <sequence resource="EMBL-CDS" id="AAG40091"/>
    </conflict>
    <text>The predicted gene has been split into 2 genes: At1g25145 and At1g25150.</text>
</comment>